<feature type="chain" id="PRO_0000197084" description="SWI/SNF and RSC complexes subunit ssr2">
    <location>
        <begin position="1"/>
        <end position="503"/>
    </location>
</feature>
<feature type="domain" description="SWIRM" evidence="3">
    <location>
        <begin position="18"/>
        <end position="115"/>
    </location>
</feature>
<feature type="domain" description="SANT" evidence="4">
    <location>
        <begin position="245"/>
        <end position="296"/>
    </location>
</feature>
<feature type="zinc finger region" description="ZZ-type; degenerate" evidence="2">
    <location>
        <begin position="188"/>
        <end position="242"/>
    </location>
</feature>
<feature type="binding site" evidence="2">
    <location>
        <position position="193"/>
    </location>
    <ligand>
        <name>Zn(2+)</name>
        <dbReference type="ChEBI" id="CHEBI:29105"/>
    </ligand>
</feature>
<feature type="binding site" evidence="2">
    <location>
        <position position="196"/>
    </location>
    <ligand>
        <name>Zn(2+)</name>
        <dbReference type="ChEBI" id="CHEBI:29105"/>
    </ligand>
</feature>
<feature type="binding site" evidence="2">
    <location>
        <position position="216"/>
    </location>
    <ligand>
        <name>Zn(2+)</name>
        <dbReference type="ChEBI" id="CHEBI:29105"/>
    </ligand>
</feature>
<feature type="binding site" evidence="2">
    <location>
        <position position="219"/>
    </location>
    <ligand>
        <name>Zn(2+)</name>
        <dbReference type="ChEBI" id="CHEBI:29105"/>
    </ligand>
</feature>
<feature type="modified residue" description="Phosphoserine" evidence="6">
    <location>
        <position position="175"/>
    </location>
</feature>
<feature type="modified residue" description="Phosphoserine" evidence="6">
    <location>
        <position position="306"/>
    </location>
</feature>
<feature type="sequence conflict" description="In Ref. 2; BAA13888." evidence="8" ref="2">
    <original>D</original>
    <variation>A</variation>
    <location>
        <position position="465"/>
    </location>
</feature>
<sequence length="503" mass="57685">MTLDQVRIPFLVEQTYPIIVPSYAGWFDMSKIHDIERRSNPEFFNGKSPLKTPSIYKDYRDFMINSYRLEPNEYLTVTACRRNLVGDVCAIIRVHAFLEQWGLINYQIDPETRPAFRLPPISGHVQAISNTPIVTQEMLAQHPPPSTVGGSSSQEFVKLEEKHYSPSLNAMEQTSPKEEDEKSDKVPRVDKVCFTCGVNCSQTWYHNLKNKKYDICPNCYKQGRFSSSFNSSDFLCMDAIDFNHDEEKPWSNQETLLLLEAIETYGDDWNQIALHVGSRTKEQCLIHFLQIPIEDPYRQKLQGDFSPFKKGFLPFDENENPVLSTLTYLASIVQQGMKERKQNESVKQGETSFGNSEFKNPLERVAYYALKSAAQKAKLIAAFENRQLRRLVFSLIQAQLEKLQLKMKVLEQLEKMCSLELSELDLRGKNLLLSRLSTKKMLLAFNKKLEEAVNLGGEDGLKIIDDLMSTEHAEALLTFEMPTATTVSPLSKQYPDKFRTIAL</sequence>
<gene>
    <name type="primary">ssr2</name>
    <name type="ORF">SPAC23H3.10</name>
</gene>
<accession>O14470</accession>
<accession>P78877</accession>
<name>SSR2_SCHPO</name>
<keyword id="KW-0156">Chromatin regulator</keyword>
<keyword id="KW-0963">Cytoplasm</keyword>
<keyword id="KW-0238">DNA-binding</keyword>
<keyword id="KW-0479">Metal-binding</keyword>
<keyword id="KW-0539">Nucleus</keyword>
<keyword id="KW-0597">Phosphoprotein</keyword>
<keyword id="KW-1185">Reference proteome</keyword>
<keyword id="KW-0804">Transcription</keyword>
<keyword id="KW-0805">Transcription regulation</keyword>
<keyword id="KW-0862">Zinc</keyword>
<keyword id="KW-0863">Zinc-finger</keyword>
<organism>
    <name type="scientific">Schizosaccharomyces pombe (strain 972 / ATCC 24843)</name>
    <name type="common">Fission yeast</name>
    <dbReference type="NCBI Taxonomy" id="284812"/>
    <lineage>
        <taxon>Eukaryota</taxon>
        <taxon>Fungi</taxon>
        <taxon>Dikarya</taxon>
        <taxon>Ascomycota</taxon>
        <taxon>Taphrinomycotina</taxon>
        <taxon>Schizosaccharomycetes</taxon>
        <taxon>Schizosaccharomycetales</taxon>
        <taxon>Schizosaccharomycetaceae</taxon>
        <taxon>Schizosaccharomyces</taxon>
    </lineage>
</organism>
<evidence type="ECO:0000250" key="1"/>
<evidence type="ECO:0000255" key="2">
    <source>
        <dbReference type="PROSITE-ProRule" id="PRU00228"/>
    </source>
</evidence>
<evidence type="ECO:0000255" key="3">
    <source>
        <dbReference type="PROSITE-ProRule" id="PRU00247"/>
    </source>
</evidence>
<evidence type="ECO:0000255" key="4">
    <source>
        <dbReference type="PROSITE-ProRule" id="PRU00624"/>
    </source>
</evidence>
<evidence type="ECO:0000269" key="5">
    <source>
    </source>
</evidence>
<evidence type="ECO:0000269" key="6">
    <source>
    </source>
</evidence>
<evidence type="ECO:0000269" key="7">
    <source>
    </source>
</evidence>
<evidence type="ECO:0000305" key="8"/>
<proteinExistence type="evidence at protein level"/>
<dbReference type="EMBL" id="CU329670">
    <property type="protein sequence ID" value="CAB16236.1"/>
    <property type="molecule type" value="Genomic_DNA"/>
</dbReference>
<dbReference type="EMBL" id="D89227">
    <property type="protein sequence ID" value="BAA13888.1"/>
    <property type="molecule type" value="mRNA"/>
</dbReference>
<dbReference type="PIR" id="T38303">
    <property type="entry name" value="T38303"/>
</dbReference>
<dbReference type="PIR" id="T43061">
    <property type="entry name" value="T43061"/>
</dbReference>
<dbReference type="RefSeq" id="NP_593800.1">
    <property type="nucleotide sequence ID" value="NM_001019229.2"/>
</dbReference>
<dbReference type="SMR" id="O14470"/>
<dbReference type="BioGRID" id="278342">
    <property type="interactions" value="14"/>
</dbReference>
<dbReference type="ComplexPortal" id="CPX-6362">
    <property type="entry name" value="SWI/SNF chromatin remodelling complex"/>
</dbReference>
<dbReference type="ComplexPortal" id="CPX-6363">
    <property type="entry name" value="RSC chromatin remodelling complex"/>
</dbReference>
<dbReference type="DIP" id="DIP-48383N"/>
<dbReference type="FunCoup" id="O14470">
    <property type="interactions" value="93"/>
</dbReference>
<dbReference type="IntAct" id="O14470">
    <property type="interactions" value="10"/>
</dbReference>
<dbReference type="STRING" id="284812.O14470"/>
<dbReference type="iPTMnet" id="O14470"/>
<dbReference type="PaxDb" id="4896-SPAC23H3.10.1"/>
<dbReference type="EnsemblFungi" id="SPAC23H3.10.1">
    <property type="protein sequence ID" value="SPAC23H3.10.1:pep"/>
    <property type="gene ID" value="SPAC23H3.10"/>
</dbReference>
<dbReference type="GeneID" id="2541851"/>
<dbReference type="KEGG" id="spo:2541851"/>
<dbReference type="PomBase" id="SPAC23H3.10">
    <property type="gene designation" value="ssr2"/>
</dbReference>
<dbReference type="VEuPathDB" id="FungiDB:SPAC23H3.10"/>
<dbReference type="eggNOG" id="KOG1279">
    <property type="taxonomic scope" value="Eukaryota"/>
</dbReference>
<dbReference type="HOGENOM" id="CLU_004447_3_2_1"/>
<dbReference type="InParanoid" id="O14470"/>
<dbReference type="OMA" id="QQFNEME"/>
<dbReference type="PhylomeDB" id="O14470"/>
<dbReference type="Reactome" id="R-SPO-3214858">
    <property type="pathway name" value="RMTs methylate histone arginines"/>
</dbReference>
<dbReference type="PRO" id="PR:O14470"/>
<dbReference type="Proteomes" id="UP000002485">
    <property type="component" value="Chromosome I"/>
</dbReference>
<dbReference type="GO" id="GO:0000785">
    <property type="term" value="C:chromatin"/>
    <property type="evidence" value="ECO:0000303"/>
    <property type="project" value="ComplexPortal"/>
</dbReference>
<dbReference type="GO" id="GO:0005737">
    <property type="term" value="C:cytoplasm"/>
    <property type="evidence" value="ECO:0007005"/>
    <property type="project" value="PomBase"/>
</dbReference>
<dbReference type="GO" id="GO:0016586">
    <property type="term" value="C:RSC-type complex"/>
    <property type="evidence" value="ECO:0000314"/>
    <property type="project" value="PomBase"/>
</dbReference>
<dbReference type="GO" id="GO:0016514">
    <property type="term" value="C:SWI/SNF complex"/>
    <property type="evidence" value="ECO:0000314"/>
    <property type="project" value="PomBase"/>
</dbReference>
<dbReference type="GO" id="GO:0003677">
    <property type="term" value="F:DNA binding"/>
    <property type="evidence" value="ECO:0000255"/>
    <property type="project" value="PomBase"/>
</dbReference>
<dbReference type="GO" id="GO:0042393">
    <property type="term" value="F:histone binding"/>
    <property type="evidence" value="ECO:0000318"/>
    <property type="project" value="GO_Central"/>
</dbReference>
<dbReference type="GO" id="GO:0008270">
    <property type="term" value="F:zinc ion binding"/>
    <property type="evidence" value="ECO:0007669"/>
    <property type="project" value="UniProtKB-KW"/>
</dbReference>
<dbReference type="GO" id="GO:0006338">
    <property type="term" value="P:chromatin remodeling"/>
    <property type="evidence" value="ECO:0000303"/>
    <property type="project" value="ComplexPortal"/>
</dbReference>
<dbReference type="GO" id="GO:0045893">
    <property type="term" value="P:positive regulation of DNA-templated transcription"/>
    <property type="evidence" value="ECO:0000318"/>
    <property type="project" value="GO_Central"/>
</dbReference>
<dbReference type="GO" id="GO:0006357">
    <property type="term" value="P:regulation of transcription by RNA polymerase II"/>
    <property type="evidence" value="ECO:0000304"/>
    <property type="project" value="PomBase"/>
</dbReference>
<dbReference type="GO" id="GO:0045815">
    <property type="term" value="P:transcription initiation-coupled chromatin remodeling"/>
    <property type="evidence" value="ECO:0000305"/>
    <property type="project" value="PomBase"/>
</dbReference>
<dbReference type="CDD" id="cd00167">
    <property type="entry name" value="SANT"/>
    <property type="match status" value="1"/>
</dbReference>
<dbReference type="CDD" id="cd02336">
    <property type="entry name" value="ZZ_RSC8"/>
    <property type="match status" value="1"/>
</dbReference>
<dbReference type="FunFam" id="1.10.10.60:FF:000014">
    <property type="entry name" value="SWI/SNF complex subunit SMARCC2 isoform C"/>
    <property type="match status" value="1"/>
</dbReference>
<dbReference type="FunFam" id="1.10.10.10:FF:000020">
    <property type="entry name" value="SWI/SNF complex subunit SMARCC2 isoform c"/>
    <property type="match status" value="1"/>
</dbReference>
<dbReference type="Gene3D" id="1.10.10.60">
    <property type="entry name" value="Homeodomain-like"/>
    <property type="match status" value="1"/>
</dbReference>
<dbReference type="Gene3D" id="1.10.10.10">
    <property type="entry name" value="Winged helix-like DNA-binding domain superfamily/Winged helix DNA-binding domain"/>
    <property type="match status" value="1"/>
</dbReference>
<dbReference type="InterPro" id="IPR009057">
    <property type="entry name" value="Homeodomain-like_sf"/>
</dbReference>
<dbReference type="InterPro" id="IPR041984">
    <property type="entry name" value="Rsc8/Ssr1/Ssr2_ZZ"/>
</dbReference>
<dbReference type="InterPro" id="IPR001005">
    <property type="entry name" value="SANT/Myb"/>
</dbReference>
<dbReference type="InterPro" id="IPR017884">
    <property type="entry name" value="SANT_dom"/>
</dbReference>
<dbReference type="InterPro" id="IPR032451">
    <property type="entry name" value="SMARCC_C"/>
</dbReference>
<dbReference type="InterPro" id="IPR007526">
    <property type="entry name" value="SWIRM"/>
</dbReference>
<dbReference type="InterPro" id="IPR036388">
    <property type="entry name" value="WH-like_DNA-bd_sf"/>
</dbReference>
<dbReference type="InterPro" id="IPR000433">
    <property type="entry name" value="Znf_ZZ"/>
</dbReference>
<dbReference type="PANTHER" id="PTHR12802">
    <property type="entry name" value="SWI/SNF COMPLEX-RELATED"/>
    <property type="match status" value="1"/>
</dbReference>
<dbReference type="PANTHER" id="PTHR12802:SF166">
    <property type="entry name" value="SWI_SNF AND RSC COMPLEXES SUBUNIT SSR2"/>
    <property type="match status" value="1"/>
</dbReference>
<dbReference type="Pfam" id="PF00249">
    <property type="entry name" value="Myb_DNA-binding"/>
    <property type="match status" value="1"/>
</dbReference>
<dbReference type="Pfam" id="PF04433">
    <property type="entry name" value="SWIRM"/>
    <property type="match status" value="1"/>
</dbReference>
<dbReference type="Pfam" id="PF16495">
    <property type="entry name" value="SWIRM-assoc_1"/>
    <property type="match status" value="1"/>
</dbReference>
<dbReference type="SMART" id="SM00717">
    <property type="entry name" value="SANT"/>
    <property type="match status" value="1"/>
</dbReference>
<dbReference type="SMART" id="SM00291">
    <property type="entry name" value="ZnF_ZZ"/>
    <property type="match status" value="1"/>
</dbReference>
<dbReference type="SUPFAM" id="SSF46689">
    <property type="entry name" value="Homeodomain-like"/>
    <property type="match status" value="2"/>
</dbReference>
<dbReference type="PROSITE" id="PS51293">
    <property type="entry name" value="SANT"/>
    <property type="match status" value="1"/>
</dbReference>
<dbReference type="PROSITE" id="PS50934">
    <property type="entry name" value="SWIRM"/>
    <property type="match status" value="1"/>
</dbReference>
<dbReference type="PROSITE" id="PS50135">
    <property type="entry name" value="ZF_ZZ_2"/>
    <property type="match status" value="1"/>
</dbReference>
<reference key="1">
    <citation type="journal article" date="2002" name="Nature">
        <title>The genome sequence of Schizosaccharomyces pombe.</title>
        <authorList>
            <person name="Wood V."/>
            <person name="Gwilliam R."/>
            <person name="Rajandream M.A."/>
            <person name="Lyne M.H."/>
            <person name="Lyne R."/>
            <person name="Stewart A."/>
            <person name="Sgouros J.G."/>
            <person name="Peat N."/>
            <person name="Hayles J."/>
            <person name="Baker S.G."/>
            <person name="Basham D."/>
            <person name="Bowman S."/>
            <person name="Brooks K."/>
            <person name="Brown D."/>
            <person name="Brown S."/>
            <person name="Chillingworth T."/>
            <person name="Churcher C.M."/>
            <person name="Collins M."/>
            <person name="Connor R."/>
            <person name="Cronin A."/>
            <person name="Davis P."/>
            <person name="Feltwell T."/>
            <person name="Fraser A."/>
            <person name="Gentles S."/>
            <person name="Goble A."/>
            <person name="Hamlin N."/>
            <person name="Harris D.E."/>
            <person name="Hidalgo J."/>
            <person name="Hodgson G."/>
            <person name="Holroyd S."/>
            <person name="Hornsby T."/>
            <person name="Howarth S."/>
            <person name="Huckle E.J."/>
            <person name="Hunt S."/>
            <person name="Jagels K."/>
            <person name="James K.D."/>
            <person name="Jones L."/>
            <person name="Jones M."/>
            <person name="Leather S."/>
            <person name="McDonald S."/>
            <person name="McLean J."/>
            <person name="Mooney P."/>
            <person name="Moule S."/>
            <person name="Mungall K.L."/>
            <person name="Murphy L.D."/>
            <person name="Niblett D."/>
            <person name="Odell C."/>
            <person name="Oliver K."/>
            <person name="O'Neil S."/>
            <person name="Pearson D."/>
            <person name="Quail M.A."/>
            <person name="Rabbinowitsch E."/>
            <person name="Rutherford K.M."/>
            <person name="Rutter S."/>
            <person name="Saunders D."/>
            <person name="Seeger K."/>
            <person name="Sharp S."/>
            <person name="Skelton J."/>
            <person name="Simmonds M.N."/>
            <person name="Squares R."/>
            <person name="Squares S."/>
            <person name="Stevens K."/>
            <person name="Taylor K."/>
            <person name="Taylor R.G."/>
            <person name="Tivey A."/>
            <person name="Walsh S.V."/>
            <person name="Warren T."/>
            <person name="Whitehead S."/>
            <person name="Woodward J.R."/>
            <person name="Volckaert G."/>
            <person name="Aert R."/>
            <person name="Robben J."/>
            <person name="Grymonprez B."/>
            <person name="Weltjens I."/>
            <person name="Vanstreels E."/>
            <person name="Rieger M."/>
            <person name="Schaefer M."/>
            <person name="Mueller-Auer S."/>
            <person name="Gabel C."/>
            <person name="Fuchs M."/>
            <person name="Duesterhoeft A."/>
            <person name="Fritzc C."/>
            <person name="Holzer E."/>
            <person name="Moestl D."/>
            <person name="Hilbert H."/>
            <person name="Borzym K."/>
            <person name="Langer I."/>
            <person name="Beck A."/>
            <person name="Lehrach H."/>
            <person name="Reinhardt R."/>
            <person name="Pohl T.M."/>
            <person name="Eger P."/>
            <person name="Zimmermann W."/>
            <person name="Wedler H."/>
            <person name="Wambutt R."/>
            <person name="Purnelle B."/>
            <person name="Goffeau A."/>
            <person name="Cadieu E."/>
            <person name="Dreano S."/>
            <person name="Gloux S."/>
            <person name="Lelaure V."/>
            <person name="Mottier S."/>
            <person name="Galibert F."/>
            <person name="Aves S.J."/>
            <person name="Xiang Z."/>
            <person name="Hunt C."/>
            <person name="Moore K."/>
            <person name="Hurst S.M."/>
            <person name="Lucas M."/>
            <person name="Rochet M."/>
            <person name="Gaillardin C."/>
            <person name="Tallada V.A."/>
            <person name="Garzon A."/>
            <person name="Thode G."/>
            <person name="Daga R.R."/>
            <person name="Cruzado L."/>
            <person name="Jimenez J."/>
            <person name="Sanchez M."/>
            <person name="del Rey F."/>
            <person name="Benito J."/>
            <person name="Dominguez A."/>
            <person name="Revuelta J.L."/>
            <person name="Moreno S."/>
            <person name="Armstrong J."/>
            <person name="Forsburg S.L."/>
            <person name="Cerutti L."/>
            <person name="Lowe T."/>
            <person name="McCombie W.R."/>
            <person name="Paulsen I."/>
            <person name="Potashkin J."/>
            <person name="Shpakovski G.V."/>
            <person name="Ussery D."/>
            <person name="Barrell B.G."/>
            <person name="Nurse P."/>
        </authorList>
    </citation>
    <scope>NUCLEOTIDE SEQUENCE [LARGE SCALE GENOMIC DNA]</scope>
    <source>
        <strain>972 / ATCC 24843</strain>
    </source>
</reference>
<reference key="2">
    <citation type="journal article" date="1997" name="DNA Res.">
        <title>Identification of open reading frames in Schizosaccharomyces pombe cDNAs.</title>
        <authorList>
            <person name="Yoshioka S."/>
            <person name="Kato K."/>
            <person name="Nakai K."/>
            <person name="Okayama H."/>
            <person name="Nojima H."/>
        </authorList>
    </citation>
    <scope>NUCLEOTIDE SEQUENCE [LARGE SCALE MRNA] OF 174-503</scope>
    <source>
        <strain>PR745</strain>
    </source>
</reference>
<reference key="3">
    <citation type="journal article" date="2006" name="Nat. Biotechnol.">
        <title>ORFeome cloning and global analysis of protein localization in the fission yeast Schizosaccharomyces pombe.</title>
        <authorList>
            <person name="Matsuyama A."/>
            <person name="Arai R."/>
            <person name="Yashiroda Y."/>
            <person name="Shirai A."/>
            <person name="Kamata A."/>
            <person name="Sekido S."/>
            <person name="Kobayashi Y."/>
            <person name="Hashimoto A."/>
            <person name="Hamamoto M."/>
            <person name="Hiraoka Y."/>
            <person name="Horinouchi S."/>
            <person name="Yoshida M."/>
        </authorList>
    </citation>
    <scope>SUBCELLULAR LOCATION [LARGE SCALE ANALYSIS]</scope>
</reference>
<reference key="4">
    <citation type="journal article" date="2008" name="J. Proteome Res.">
        <title>Phosphoproteome analysis of fission yeast.</title>
        <authorList>
            <person name="Wilson-Grady J.T."/>
            <person name="Villen J."/>
            <person name="Gygi S.P."/>
        </authorList>
    </citation>
    <scope>PHOSPHORYLATION [LARGE SCALE ANALYSIS] AT SER-175 AND SER-306</scope>
    <scope>IDENTIFICATION BY MASS SPECTROMETRY</scope>
</reference>
<reference key="5">
    <citation type="journal article" date="2008" name="Nat. Struct. Mol. Biol.">
        <title>Fission yeast SWI/SNF and RSC complexes show compositional and functional differences from budding yeast.</title>
        <authorList>
            <person name="Monahan B.J."/>
            <person name="Villen J."/>
            <person name="Marguerat S."/>
            <person name="Baehler J."/>
            <person name="Gygi S.P."/>
            <person name="Winston F."/>
        </authorList>
    </citation>
    <scope>IDENTIFICATION IN THE SWI/SNF AND RSC COMPLEXES</scope>
    <scope>FUNCTION OF THE SWI/SNF AND RSC COMPLEXES</scope>
    <scope>IDENTIFICATION BY MASS SPECTROMETRY</scope>
</reference>
<comment type="function">
    <text evidence="7">Component of the chromatin structure remodeling complex (RSC), which is involved in transcription regulation and nucleosome positioning. Controls particularly membrane and organelle development genes. Part of the SWI/SNF complex, an ATP-dependent chromatin remodeling complex, required for the positive and negative regulation of gene expression of a large number of genes. It changes chromatin structure by altering DNA-histone contacts within a nucleosome, leading eventually to a change in nucleosome position, thus facilitating or repressing binding of gene-specific transcription factors.</text>
</comment>
<comment type="subunit">
    <text evidence="1 7">Component of the RSC complex composed of at least arp9, arp42, rsc1, rsc4, rsc7, rsc9, rsc58, sfh1, snf21, ssr1, ssr2, ssr3 and ssr4. The complex interacts with histone and histone variant components of centromeric chromatin (By similarity). Component of the SWI/SNF global transcription activator complex composed of at least arp9, arp42, snf5, snf22, snf30, sbf59, sol1, ssr1, ssr2, ssr3, ssr4 and tfg3.</text>
</comment>
<comment type="subcellular location">
    <subcellularLocation>
        <location evidence="5">Cytoplasm</location>
    </subcellularLocation>
    <subcellularLocation>
        <location evidence="4">Nucleus</location>
    </subcellularLocation>
</comment>
<comment type="similarity">
    <text evidence="8">Belongs to the SMARCC family.</text>
</comment>
<protein>
    <recommendedName>
        <fullName>SWI/SNF and RSC complexes subunit ssr2</fullName>
    </recommendedName>
</protein>